<name>DHP1_PSEAI</name>
<keyword id="KW-0289">Folate biosynthesis</keyword>
<keyword id="KW-0460">Magnesium</keyword>
<keyword id="KW-0479">Metal-binding</keyword>
<keyword id="KW-0614">Plasmid</keyword>
<keyword id="KW-0808">Transferase</keyword>
<evidence type="ECO:0000250" key="1"/>
<evidence type="ECO:0000250" key="2">
    <source>
        <dbReference type="UniProtKB" id="P0AC13"/>
    </source>
</evidence>
<evidence type="ECO:0000250" key="3">
    <source>
        <dbReference type="UniProtKB" id="P9WND1"/>
    </source>
</evidence>
<evidence type="ECO:0000255" key="4">
    <source>
        <dbReference type="PROSITE-ProRule" id="PRU00334"/>
    </source>
</evidence>
<evidence type="ECO:0000305" key="5"/>
<reference key="1">
    <citation type="journal article" date="1992" name="J. Bacteriol.">
        <title>Characterization of In0 of Pseudomonas aeruginosa plasmid pVS1, an ancestor of integrons of multiresistance plasmids and transposons of Gram-negative bacteria.</title>
        <authorList>
            <person name="Bissonnette L."/>
            <person name="Roy P.H."/>
        </authorList>
    </citation>
    <scope>NUCLEOTIDE SEQUENCE [GENOMIC DNA]</scope>
    <source>
        <plasmid>pVS1</plasmid>
    </source>
</reference>
<protein>
    <recommendedName>
        <fullName>Dihydropteroate synthase type-1</fullName>
        <ecNumber>2.5.1.15</ecNumber>
    </recommendedName>
    <alternativeName>
        <fullName>Dihydropteroate pyrophosphorylase type I</fullName>
    </alternativeName>
    <alternativeName>
        <fullName>Dihydropteroate synthase type I</fullName>
        <shortName>DHPS</shortName>
    </alternativeName>
</protein>
<comment type="function">
    <text evidence="2">Catalyzes the condensation of para-aminobenzoate (pABA) with 6-hydroxymethyl-7,8-dihydropterin diphosphate (DHPt-PP) to form 7,8-dihydropteroate (H2Pte), the immediate precursor of folate derivatives.</text>
</comment>
<comment type="catalytic activity">
    <reaction evidence="2">
        <text>(7,8-dihydropterin-6-yl)methyl diphosphate + 4-aminobenzoate = 7,8-dihydropteroate + diphosphate</text>
        <dbReference type="Rhea" id="RHEA:19949"/>
        <dbReference type="ChEBI" id="CHEBI:17836"/>
        <dbReference type="ChEBI" id="CHEBI:17839"/>
        <dbReference type="ChEBI" id="CHEBI:33019"/>
        <dbReference type="ChEBI" id="CHEBI:72950"/>
        <dbReference type="EC" id="2.5.1.15"/>
    </reaction>
</comment>
<comment type="cofactor">
    <cofactor evidence="2">
        <name>Mg(2+)</name>
        <dbReference type="ChEBI" id="CHEBI:18420"/>
    </cofactor>
</comment>
<comment type="pathway">
    <text>Cofactor biosynthesis; tetrahydrofolate biosynthesis; 7,8-dihydrofolate from 2-amino-4-hydroxy-6-hydroxymethyl-7,8-dihydropteridine diphosphate and 4-aminobenzoate: step 1/2.</text>
</comment>
<comment type="subunit">
    <text evidence="1">Homodimer or homotrimer.</text>
</comment>
<comment type="miscellaneous">
    <text>The sulI gene is located on various large self-transmissible resistance plasmids and on transposons related to Tn21.</text>
</comment>
<comment type="similarity">
    <text evidence="5">Belongs to the DHPS family.</text>
</comment>
<feature type="chain" id="PRO_0000168202" description="Dihydropteroate synthase type-1">
    <location>
        <begin position="1"/>
        <end position="279"/>
    </location>
</feature>
<feature type="domain" description="Pterin-binding" evidence="4">
    <location>
        <begin position="1"/>
        <end position="258"/>
    </location>
</feature>
<feature type="binding site" evidence="3">
    <location>
        <position position="9"/>
    </location>
    <ligand>
        <name>Mg(2+)</name>
        <dbReference type="ChEBI" id="CHEBI:18420"/>
    </ligand>
</feature>
<feature type="binding site" evidence="2">
    <location>
        <position position="82"/>
    </location>
    <ligand>
        <name>(7,8-dihydropterin-6-yl)methyl diphosphate</name>
        <dbReference type="ChEBI" id="CHEBI:72950"/>
    </ligand>
</feature>
<feature type="binding site" evidence="2">
    <location>
        <position position="101"/>
    </location>
    <ligand>
        <name>(7,8-dihydropterin-6-yl)methyl diphosphate</name>
        <dbReference type="ChEBI" id="CHEBI:72950"/>
    </ligand>
</feature>
<feature type="binding site" evidence="2">
    <location>
        <position position="173"/>
    </location>
    <ligand>
        <name>(7,8-dihydropterin-6-yl)methyl diphosphate</name>
        <dbReference type="ChEBI" id="CHEBI:72950"/>
    </ligand>
</feature>
<feature type="binding site" evidence="2">
    <location>
        <position position="212"/>
    </location>
    <ligand>
        <name>(7,8-dihydropterin-6-yl)methyl diphosphate</name>
        <dbReference type="ChEBI" id="CHEBI:72950"/>
    </ligand>
</feature>
<feature type="binding site" evidence="2">
    <location>
        <begin position="246"/>
        <end position="248"/>
    </location>
    <ligand>
        <name>(7,8-dihydropterin-6-yl)methyl diphosphate</name>
        <dbReference type="ChEBI" id="CHEBI:72950"/>
    </ligand>
</feature>
<accession>P0C003</accession>
<accession>P11744</accession>
<accession>Q93K51</accession>
<organism>
    <name type="scientific">Pseudomonas aeruginosa</name>
    <dbReference type="NCBI Taxonomy" id="287"/>
    <lineage>
        <taxon>Bacteria</taxon>
        <taxon>Pseudomonadati</taxon>
        <taxon>Pseudomonadota</taxon>
        <taxon>Gammaproteobacteria</taxon>
        <taxon>Pseudomonadales</taxon>
        <taxon>Pseudomonadaceae</taxon>
        <taxon>Pseudomonas</taxon>
    </lineage>
</organism>
<proteinExistence type="inferred from homology"/>
<gene>
    <name type="primary">sulI</name>
</gene>
<dbReference type="EC" id="2.5.1.15"/>
<dbReference type="EMBL" id="U49101">
    <property type="protein sequence ID" value="AAC44317.1"/>
    <property type="molecule type" value="Genomic_DNA"/>
</dbReference>
<dbReference type="EMBL" id="M73819">
    <property type="protein sequence ID" value="AAA25859.1"/>
    <property type="molecule type" value="Genomic_DNA"/>
</dbReference>
<dbReference type="PIR" id="C42646">
    <property type="entry name" value="C42646"/>
</dbReference>
<dbReference type="RefSeq" id="YP_245438.1">
    <property type="nucleotide sequence ID" value="NC_007100.1"/>
</dbReference>
<dbReference type="SMR" id="P0C003"/>
<dbReference type="CARD" id="ARO:3000410">
    <property type="molecule name" value="sul1"/>
    <property type="mechanism identifier" value="ARO:0001002"/>
    <property type="mechanism name" value="antibiotic target replacement"/>
</dbReference>
<dbReference type="UniPathway" id="UPA00077">
    <property type="reaction ID" value="UER00156"/>
</dbReference>
<dbReference type="GO" id="GO:0005829">
    <property type="term" value="C:cytosol"/>
    <property type="evidence" value="ECO:0007669"/>
    <property type="project" value="TreeGrafter"/>
</dbReference>
<dbReference type="GO" id="GO:0004156">
    <property type="term" value="F:dihydropteroate synthase activity"/>
    <property type="evidence" value="ECO:0007669"/>
    <property type="project" value="UniProtKB-EC"/>
</dbReference>
<dbReference type="GO" id="GO:0046872">
    <property type="term" value="F:metal ion binding"/>
    <property type="evidence" value="ECO:0007669"/>
    <property type="project" value="UniProtKB-KW"/>
</dbReference>
<dbReference type="GO" id="GO:0046656">
    <property type="term" value="P:folic acid biosynthetic process"/>
    <property type="evidence" value="ECO:0007669"/>
    <property type="project" value="UniProtKB-KW"/>
</dbReference>
<dbReference type="GO" id="GO:0046654">
    <property type="term" value="P:tetrahydrofolate biosynthetic process"/>
    <property type="evidence" value="ECO:0007669"/>
    <property type="project" value="UniProtKB-UniPathway"/>
</dbReference>
<dbReference type="CDD" id="cd00739">
    <property type="entry name" value="DHPS"/>
    <property type="match status" value="1"/>
</dbReference>
<dbReference type="Gene3D" id="3.20.20.20">
    <property type="entry name" value="Dihydropteroate synthase-like"/>
    <property type="match status" value="1"/>
</dbReference>
<dbReference type="InterPro" id="IPR045031">
    <property type="entry name" value="DHP_synth-like"/>
</dbReference>
<dbReference type="InterPro" id="IPR006390">
    <property type="entry name" value="DHP_synth_dom"/>
</dbReference>
<dbReference type="InterPro" id="IPR011005">
    <property type="entry name" value="Dihydropteroate_synth-like_sf"/>
</dbReference>
<dbReference type="InterPro" id="IPR000489">
    <property type="entry name" value="Pterin-binding_dom"/>
</dbReference>
<dbReference type="NCBIfam" id="TIGR01496">
    <property type="entry name" value="DHPS"/>
    <property type="match status" value="1"/>
</dbReference>
<dbReference type="NCBIfam" id="NF000294">
    <property type="entry name" value="Sul1"/>
    <property type="match status" value="1"/>
</dbReference>
<dbReference type="PANTHER" id="PTHR20941">
    <property type="entry name" value="FOLATE SYNTHESIS PROTEINS"/>
    <property type="match status" value="1"/>
</dbReference>
<dbReference type="PANTHER" id="PTHR20941:SF1">
    <property type="entry name" value="FOLIC ACID SYNTHESIS PROTEIN FOL1"/>
    <property type="match status" value="1"/>
</dbReference>
<dbReference type="Pfam" id="PF00809">
    <property type="entry name" value="Pterin_bind"/>
    <property type="match status" value="1"/>
</dbReference>
<dbReference type="SUPFAM" id="SSF51717">
    <property type="entry name" value="Dihydropteroate synthetase-like"/>
    <property type="match status" value="1"/>
</dbReference>
<dbReference type="PROSITE" id="PS00792">
    <property type="entry name" value="DHPS_1"/>
    <property type="match status" value="1"/>
</dbReference>
<dbReference type="PROSITE" id="PS00793">
    <property type="entry name" value="DHPS_2"/>
    <property type="match status" value="1"/>
</dbReference>
<dbReference type="PROSITE" id="PS50972">
    <property type="entry name" value="PTERIN_BINDING"/>
    <property type="match status" value="1"/>
</dbReference>
<geneLocation type="plasmid">
    <name>pVS1</name>
</geneLocation>
<sequence>MVTVFGILNLTEDSFFDESRRLDPAGAVTAAIEMLRVGSDVVDVGPAASHPDARPVSPADEIRRIAPLLDALSDQMHRVSIDSFQPETQRYALKRGVGYLNDIQGFPDPALYPDIAEADCRLVVMHSAQRDGIATRTGHLRPEDALDEIVRFFEARVSALRRSGVAADRLILDPGMGFFLSPAPETSLHVLSNLQKLKSALGLPLLVSVSRKSFLGATVGLPVKDLGPASLAAELHAIGNGADYVRTHAPGDLRSAITFSETLAKFRSRDARDRGLDHA</sequence>